<dbReference type="EC" id="2.1.1.132"/>
<dbReference type="EMBL" id="AL123456">
    <property type="protein sequence ID" value="CCP44846.1"/>
    <property type="molecule type" value="Genomic_DNA"/>
</dbReference>
<dbReference type="PIR" id="C70765">
    <property type="entry name" value="C70765"/>
</dbReference>
<dbReference type="RefSeq" id="NP_216588.1">
    <property type="nucleotide sequence ID" value="NC_000962.3"/>
</dbReference>
<dbReference type="SMR" id="P9WGA9"/>
<dbReference type="FunCoup" id="P9WGA9">
    <property type="interactions" value="132"/>
</dbReference>
<dbReference type="STRING" id="83332.Rv2072c"/>
<dbReference type="PaxDb" id="83332-Rv2072c"/>
<dbReference type="DNASU" id="888321"/>
<dbReference type="GeneID" id="888321"/>
<dbReference type="KEGG" id="mtu:Rv2072c"/>
<dbReference type="KEGG" id="mtv:RVBD_2072c"/>
<dbReference type="TubercuList" id="Rv2072c"/>
<dbReference type="eggNOG" id="COG2241">
    <property type="taxonomic scope" value="Bacteria"/>
</dbReference>
<dbReference type="eggNOG" id="COG2242">
    <property type="taxonomic scope" value="Bacteria"/>
</dbReference>
<dbReference type="InParanoid" id="P9WGA9"/>
<dbReference type="OrthoDB" id="9787825at2"/>
<dbReference type="PhylomeDB" id="P9WGA9"/>
<dbReference type="UniPathway" id="UPA00148">
    <property type="reaction ID" value="UER00218"/>
</dbReference>
<dbReference type="Proteomes" id="UP000001584">
    <property type="component" value="Chromosome"/>
</dbReference>
<dbReference type="GO" id="GO:0009274">
    <property type="term" value="C:peptidoglycan-based cell wall"/>
    <property type="evidence" value="ECO:0007005"/>
    <property type="project" value="MTBBASE"/>
</dbReference>
<dbReference type="GO" id="GO:0046025">
    <property type="term" value="F:precorrin-6Y C5,15-methyltransferase (decarboxylating) activity"/>
    <property type="evidence" value="ECO:0007669"/>
    <property type="project" value="UniProtKB-EC"/>
</dbReference>
<dbReference type="GO" id="GO:0008276">
    <property type="term" value="F:protein methyltransferase activity"/>
    <property type="evidence" value="ECO:0007669"/>
    <property type="project" value="InterPro"/>
</dbReference>
<dbReference type="GO" id="GO:0009236">
    <property type="term" value="P:cobalamin biosynthetic process"/>
    <property type="evidence" value="ECO:0007669"/>
    <property type="project" value="UniProtKB-UniPathway"/>
</dbReference>
<dbReference type="GO" id="GO:0032259">
    <property type="term" value="P:methylation"/>
    <property type="evidence" value="ECO:0007669"/>
    <property type="project" value="UniProtKB-KW"/>
</dbReference>
<dbReference type="CDD" id="cd11644">
    <property type="entry name" value="Precorrin-6Y-MT"/>
    <property type="match status" value="1"/>
</dbReference>
<dbReference type="Gene3D" id="3.40.1010.10">
    <property type="entry name" value="Cobalt-precorrin-4 Transmethylase, Domain 1"/>
    <property type="match status" value="1"/>
</dbReference>
<dbReference type="Gene3D" id="3.40.50.150">
    <property type="entry name" value="Vaccinia Virus protein VP39"/>
    <property type="match status" value="1"/>
</dbReference>
<dbReference type="InterPro" id="IPR000878">
    <property type="entry name" value="4pyrrol_Mease"/>
</dbReference>
<dbReference type="InterPro" id="IPR035996">
    <property type="entry name" value="4pyrrol_Methylase_sf"/>
</dbReference>
<dbReference type="InterPro" id="IPR014777">
    <property type="entry name" value="4pyrrole_Mease_sub1"/>
</dbReference>
<dbReference type="InterPro" id="IPR012818">
    <property type="entry name" value="CbiE"/>
</dbReference>
<dbReference type="InterPro" id="IPR006365">
    <property type="entry name" value="Cbl_synth_CobL"/>
</dbReference>
<dbReference type="InterPro" id="IPR014008">
    <property type="entry name" value="Cbl_synth_MTase_CbiT"/>
</dbReference>
<dbReference type="InterPro" id="IPR050714">
    <property type="entry name" value="Cobalamin_biosynth_MTase"/>
</dbReference>
<dbReference type="InterPro" id="IPR029063">
    <property type="entry name" value="SAM-dependent_MTases_sf"/>
</dbReference>
<dbReference type="NCBIfam" id="TIGR02467">
    <property type="entry name" value="CbiE"/>
    <property type="match status" value="1"/>
</dbReference>
<dbReference type="NCBIfam" id="TIGR02469">
    <property type="entry name" value="CbiT"/>
    <property type="match status" value="1"/>
</dbReference>
<dbReference type="PANTHER" id="PTHR43182">
    <property type="entry name" value="COBALT-PRECORRIN-6B C(15)-METHYLTRANSFERASE (DECARBOXYLATING)"/>
    <property type="match status" value="1"/>
</dbReference>
<dbReference type="PANTHER" id="PTHR43182:SF1">
    <property type="entry name" value="COBALT-PRECORRIN-7 C(5)-METHYLTRANSFERASE"/>
    <property type="match status" value="1"/>
</dbReference>
<dbReference type="Pfam" id="PF00590">
    <property type="entry name" value="TP_methylase"/>
    <property type="match status" value="1"/>
</dbReference>
<dbReference type="PIRSF" id="PIRSF036428">
    <property type="entry name" value="CobL"/>
    <property type="match status" value="1"/>
</dbReference>
<dbReference type="SUPFAM" id="SSF53335">
    <property type="entry name" value="S-adenosyl-L-methionine-dependent methyltransferases"/>
    <property type="match status" value="1"/>
</dbReference>
<dbReference type="SUPFAM" id="SSF53790">
    <property type="entry name" value="Tetrapyrrole methylase"/>
    <property type="match status" value="1"/>
</dbReference>
<name>COBL_MYCTU</name>
<accession>P9WGA9</accession>
<accession>L0TA32</accession>
<accession>Q10671</accession>
<gene>
    <name type="primary">cobL</name>
    <name type="ordered locus">Rv2072c</name>
    <name type="ORF">MTCY49.11c</name>
</gene>
<comment type="function">
    <text evidence="1">Catalyzes the methylation of both C-5 and C-15 in precorrin-6Y to form precorrin-8X.</text>
</comment>
<comment type="catalytic activity">
    <reaction>
        <text>precorrin-6B + 2 S-adenosyl-L-methionine = precorrin-8X + 2 S-adenosyl-L-homocysteine + CO2 + 3 H(+)</text>
        <dbReference type="Rhea" id="RHEA:17477"/>
        <dbReference type="ChEBI" id="CHEBI:15378"/>
        <dbReference type="ChEBI" id="CHEBI:16526"/>
        <dbReference type="ChEBI" id="CHEBI:57856"/>
        <dbReference type="ChEBI" id="CHEBI:58532"/>
        <dbReference type="ChEBI" id="CHEBI:58581"/>
        <dbReference type="ChEBI" id="CHEBI:59789"/>
        <dbReference type="EC" id="2.1.1.132"/>
    </reaction>
</comment>
<comment type="pathway">
    <text>Cofactor biosynthesis; adenosylcobalamin biosynthesis; cob(II)yrinate a,c-diamide from precorrin-2 (aerobic route): step 7/10.</text>
</comment>
<comment type="similarity">
    <text evidence="2">Belongs to the precorrin methyltransferase family.</text>
</comment>
<sequence length="390" mass="41854">MIIVVGIGADGMTGLSEHSRSELRRATVIYGSKRQLALLDDTVTAERWEWPTPMLPAVQGLSPDGADLHVVASGDPLLHGIGSTLIRLFGHDNVTVLPHVSAVTLACARMGWNVYDTEVISLVTAQPHTAVRRGGRAIVLSGDRSTPQALAVLLTEHGRGDSKFSVLEQLGGPAERRRDGTARAWACDPPLDVDELNVIAVRYLLDERTSWAPDEAFAHDGQITKHPIRVLTLAALAPRPGQRLWDVGAGSGAIAVQWCRSWPGCTAVAFERDERRRRNIGFNAAAFGVSVDVRGDAPDAFDDAARPSVIFLGGGVTQPGLLEACLDSLPAGGNLVANAVTVESEAALAHAYSRLGGELRRFQHYLGEPLGGFTGWRPQLPVTQWSVTKR</sequence>
<proteinExistence type="evidence at protein level"/>
<feature type="chain" id="PRO_0000150409" description="Precorrin-6Y C(5,15)-methyltransferase [decarboxylating]">
    <location>
        <begin position="1"/>
        <end position="390"/>
    </location>
</feature>
<protein>
    <recommendedName>
        <fullName>Precorrin-6Y C(5,15)-methyltransferase [decarboxylating]</fullName>
        <shortName>Precorrin-6 methyltransferase</shortName>
        <shortName>Precorrin-6Y methylase</shortName>
        <ecNumber>2.1.1.132</ecNumber>
    </recommendedName>
</protein>
<evidence type="ECO:0000250" key="1"/>
<evidence type="ECO:0000305" key="2"/>
<keyword id="KW-0169">Cobalamin biosynthesis</keyword>
<keyword id="KW-0489">Methyltransferase</keyword>
<keyword id="KW-1185">Reference proteome</keyword>
<keyword id="KW-0949">S-adenosyl-L-methionine</keyword>
<keyword id="KW-0808">Transferase</keyword>
<reference key="1">
    <citation type="journal article" date="1998" name="Nature">
        <title>Deciphering the biology of Mycobacterium tuberculosis from the complete genome sequence.</title>
        <authorList>
            <person name="Cole S.T."/>
            <person name="Brosch R."/>
            <person name="Parkhill J."/>
            <person name="Garnier T."/>
            <person name="Churcher C.M."/>
            <person name="Harris D.E."/>
            <person name="Gordon S.V."/>
            <person name="Eiglmeier K."/>
            <person name="Gas S."/>
            <person name="Barry C.E. III"/>
            <person name="Tekaia F."/>
            <person name="Badcock K."/>
            <person name="Basham D."/>
            <person name="Brown D."/>
            <person name="Chillingworth T."/>
            <person name="Connor R."/>
            <person name="Davies R.M."/>
            <person name="Devlin K."/>
            <person name="Feltwell T."/>
            <person name="Gentles S."/>
            <person name="Hamlin N."/>
            <person name="Holroyd S."/>
            <person name="Hornsby T."/>
            <person name="Jagels K."/>
            <person name="Krogh A."/>
            <person name="McLean J."/>
            <person name="Moule S."/>
            <person name="Murphy L.D."/>
            <person name="Oliver S."/>
            <person name="Osborne J."/>
            <person name="Quail M.A."/>
            <person name="Rajandream M.A."/>
            <person name="Rogers J."/>
            <person name="Rutter S."/>
            <person name="Seeger K."/>
            <person name="Skelton S."/>
            <person name="Squares S."/>
            <person name="Squares R."/>
            <person name="Sulston J.E."/>
            <person name="Taylor K."/>
            <person name="Whitehead S."/>
            <person name="Barrell B.G."/>
        </authorList>
    </citation>
    <scope>NUCLEOTIDE SEQUENCE [LARGE SCALE GENOMIC DNA]</scope>
    <source>
        <strain>ATCC 25618 / H37Rv</strain>
    </source>
</reference>
<reference key="2">
    <citation type="journal article" date="2011" name="Mol. Cell. Proteomics">
        <title>Proteogenomic analysis of Mycobacterium tuberculosis by high resolution mass spectrometry.</title>
        <authorList>
            <person name="Kelkar D.S."/>
            <person name="Kumar D."/>
            <person name="Kumar P."/>
            <person name="Balakrishnan L."/>
            <person name="Muthusamy B."/>
            <person name="Yadav A.K."/>
            <person name="Shrivastava P."/>
            <person name="Marimuthu A."/>
            <person name="Anand S."/>
            <person name="Sundaram H."/>
            <person name="Kingsbury R."/>
            <person name="Harsha H.C."/>
            <person name="Nair B."/>
            <person name="Prasad T.S."/>
            <person name="Chauhan D.S."/>
            <person name="Katoch K."/>
            <person name="Katoch V.M."/>
            <person name="Kumar P."/>
            <person name="Chaerkady R."/>
            <person name="Ramachandran S."/>
            <person name="Dash D."/>
            <person name="Pandey A."/>
        </authorList>
    </citation>
    <scope>IDENTIFICATION BY MASS SPECTROMETRY [LARGE SCALE ANALYSIS]</scope>
    <source>
        <strain>ATCC 25618 / H37Rv</strain>
    </source>
</reference>
<organism>
    <name type="scientific">Mycobacterium tuberculosis (strain ATCC 25618 / H37Rv)</name>
    <dbReference type="NCBI Taxonomy" id="83332"/>
    <lineage>
        <taxon>Bacteria</taxon>
        <taxon>Bacillati</taxon>
        <taxon>Actinomycetota</taxon>
        <taxon>Actinomycetes</taxon>
        <taxon>Mycobacteriales</taxon>
        <taxon>Mycobacteriaceae</taxon>
        <taxon>Mycobacterium</taxon>
        <taxon>Mycobacterium tuberculosis complex</taxon>
    </lineage>
</organism>